<gene>
    <name type="primary">ZWINT</name>
</gene>
<accession>O95229</accession>
<accession>A6NNV6</accession>
<accession>Q0D2I3</accession>
<accession>Q9BWD0</accession>
<name>ZWINT_HUMAN</name>
<organism>
    <name type="scientific">Homo sapiens</name>
    <name type="common">Human</name>
    <dbReference type="NCBI Taxonomy" id="9606"/>
    <lineage>
        <taxon>Eukaryota</taxon>
        <taxon>Metazoa</taxon>
        <taxon>Chordata</taxon>
        <taxon>Craniata</taxon>
        <taxon>Vertebrata</taxon>
        <taxon>Euteleostomi</taxon>
        <taxon>Mammalia</taxon>
        <taxon>Eutheria</taxon>
        <taxon>Euarchontoglires</taxon>
        <taxon>Primates</taxon>
        <taxon>Haplorrhini</taxon>
        <taxon>Catarrhini</taxon>
        <taxon>Hominidae</taxon>
        <taxon>Homo</taxon>
    </lineage>
</organism>
<evidence type="ECO:0000250" key="1">
    <source>
        <dbReference type="UniProtKB" id="Q9CQU5"/>
    </source>
</evidence>
<evidence type="ECO:0000255" key="2"/>
<evidence type="ECO:0000256" key="3">
    <source>
        <dbReference type="SAM" id="MobiDB-lite"/>
    </source>
</evidence>
<evidence type="ECO:0000269" key="4">
    <source>
    </source>
</evidence>
<evidence type="ECO:0000269" key="5">
    <source>
    </source>
</evidence>
<evidence type="ECO:0000269" key="6">
    <source>
    </source>
</evidence>
<evidence type="ECO:0000269" key="7">
    <source>
    </source>
</evidence>
<evidence type="ECO:0000269" key="8">
    <source>
    </source>
</evidence>
<evidence type="ECO:0000269" key="9">
    <source>
    </source>
</evidence>
<evidence type="ECO:0000269" key="10">
    <source>
    </source>
</evidence>
<evidence type="ECO:0000269" key="11">
    <source>
    </source>
</evidence>
<evidence type="ECO:0000269" key="12">
    <source>
    </source>
</evidence>
<evidence type="ECO:0000269" key="13">
    <source>
    </source>
</evidence>
<evidence type="ECO:0000269" key="14">
    <source>
    </source>
</evidence>
<evidence type="ECO:0000305" key="15"/>
<evidence type="ECO:0000305" key="16">
    <source>
    </source>
</evidence>
<evidence type="ECO:0007744" key="17">
    <source>
        <dbReference type="PDB" id="8PPR"/>
    </source>
</evidence>
<evidence type="ECO:0007829" key="18">
    <source>
        <dbReference type="PDB" id="8PPR"/>
    </source>
</evidence>
<reference key="1">
    <citation type="journal article" date="2000" name="J. Cell Sci.">
        <title>HZwint-1, a novel human kinetochore component that interacts with HZW10.</title>
        <authorList>
            <person name="Starr D.A."/>
            <person name="Saffery R."/>
            <person name="Li Z."/>
            <person name="Simpson A.E."/>
            <person name="Choo K.H."/>
            <person name="Yen T.J."/>
            <person name="Goldberg M.L."/>
        </authorList>
    </citation>
    <scope>NUCLEOTIDE SEQUENCE [MRNA]</scope>
    <scope>VARIANT GLY-187</scope>
</reference>
<reference key="2">
    <citation type="journal article" date="2004" name="Nature">
        <title>The DNA sequence and comparative analysis of human chromosome 10.</title>
        <authorList>
            <person name="Deloukas P."/>
            <person name="Earthrowl M.E."/>
            <person name="Grafham D.V."/>
            <person name="Rubenfield M."/>
            <person name="French L."/>
            <person name="Steward C.A."/>
            <person name="Sims S.K."/>
            <person name="Jones M.C."/>
            <person name="Searle S."/>
            <person name="Scott C."/>
            <person name="Howe K."/>
            <person name="Hunt S.E."/>
            <person name="Andrews T.D."/>
            <person name="Gilbert J.G.R."/>
            <person name="Swarbreck D."/>
            <person name="Ashurst J.L."/>
            <person name="Taylor A."/>
            <person name="Battles J."/>
            <person name="Bird C.P."/>
            <person name="Ainscough R."/>
            <person name="Almeida J.P."/>
            <person name="Ashwell R.I.S."/>
            <person name="Ambrose K.D."/>
            <person name="Babbage A.K."/>
            <person name="Bagguley C.L."/>
            <person name="Bailey J."/>
            <person name="Banerjee R."/>
            <person name="Bates K."/>
            <person name="Beasley H."/>
            <person name="Bray-Allen S."/>
            <person name="Brown A.J."/>
            <person name="Brown J.Y."/>
            <person name="Burford D.C."/>
            <person name="Burrill W."/>
            <person name="Burton J."/>
            <person name="Cahill P."/>
            <person name="Camire D."/>
            <person name="Carter N.P."/>
            <person name="Chapman J.C."/>
            <person name="Clark S.Y."/>
            <person name="Clarke G."/>
            <person name="Clee C.M."/>
            <person name="Clegg S."/>
            <person name="Corby N."/>
            <person name="Coulson A."/>
            <person name="Dhami P."/>
            <person name="Dutta I."/>
            <person name="Dunn M."/>
            <person name="Faulkner L."/>
            <person name="Frankish A."/>
            <person name="Frankland J.A."/>
            <person name="Garner P."/>
            <person name="Garnett J."/>
            <person name="Gribble S."/>
            <person name="Griffiths C."/>
            <person name="Grocock R."/>
            <person name="Gustafson E."/>
            <person name="Hammond S."/>
            <person name="Harley J.L."/>
            <person name="Hart E."/>
            <person name="Heath P.D."/>
            <person name="Ho T.P."/>
            <person name="Hopkins B."/>
            <person name="Horne J."/>
            <person name="Howden P.J."/>
            <person name="Huckle E."/>
            <person name="Hynds C."/>
            <person name="Johnson C."/>
            <person name="Johnson D."/>
            <person name="Kana A."/>
            <person name="Kay M."/>
            <person name="Kimberley A.M."/>
            <person name="Kershaw J.K."/>
            <person name="Kokkinaki M."/>
            <person name="Laird G.K."/>
            <person name="Lawlor S."/>
            <person name="Lee H.M."/>
            <person name="Leongamornlert D.A."/>
            <person name="Laird G."/>
            <person name="Lloyd C."/>
            <person name="Lloyd D.M."/>
            <person name="Loveland J."/>
            <person name="Lovell J."/>
            <person name="McLaren S."/>
            <person name="McLay K.E."/>
            <person name="McMurray A."/>
            <person name="Mashreghi-Mohammadi M."/>
            <person name="Matthews L."/>
            <person name="Milne S."/>
            <person name="Nickerson T."/>
            <person name="Nguyen M."/>
            <person name="Overton-Larty E."/>
            <person name="Palmer S.A."/>
            <person name="Pearce A.V."/>
            <person name="Peck A.I."/>
            <person name="Pelan S."/>
            <person name="Phillimore B."/>
            <person name="Porter K."/>
            <person name="Rice C.M."/>
            <person name="Rogosin A."/>
            <person name="Ross M.T."/>
            <person name="Sarafidou T."/>
            <person name="Sehra H.K."/>
            <person name="Shownkeen R."/>
            <person name="Skuce C.D."/>
            <person name="Smith M."/>
            <person name="Standring L."/>
            <person name="Sycamore N."/>
            <person name="Tester J."/>
            <person name="Thorpe A."/>
            <person name="Torcasso W."/>
            <person name="Tracey A."/>
            <person name="Tromans A."/>
            <person name="Tsolas J."/>
            <person name="Wall M."/>
            <person name="Walsh J."/>
            <person name="Wang H."/>
            <person name="Weinstock K."/>
            <person name="West A.P."/>
            <person name="Willey D.L."/>
            <person name="Whitehead S.L."/>
            <person name="Wilming L."/>
            <person name="Wray P.W."/>
            <person name="Young L."/>
            <person name="Chen Y."/>
            <person name="Lovering R.C."/>
            <person name="Moschonas N.K."/>
            <person name="Siebert R."/>
            <person name="Fechtel K."/>
            <person name="Bentley D."/>
            <person name="Durbin R.M."/>
            <person name="Hubbard T."/>
            <person name="Doucette-Stamm L."/>
            <person name="Beck S."/>
            <person name="Smith D.R."/>
            <person name="Rogers J."/>
        </authorList>
    </citation>
    <scope>NUCLEOTIDE SEQUENCE [LARGE SCALE GENOMIC DNA]</scope>
</reference>
<reference key="3">
    <citation type="journal article" date="2004" name="Genome Res.">
        <title>The status, quality, and expansion of the NIH full-length cDNA project: the Mammalian Gene Collection (MGC).</title>
        <authorList>
            <consortium name="The MGC Project Team"/>
        </authorList>
    </citation>
    <scope>NUCLEOTIDE SEQUENCE [LARGE SCALE MRNA]</scope>
    <scope>VARIANT GLY-187</scope>
    <source>
        <tissue>Colon</tissue>
        <tissue>Lymph</tissue>
        <tissue>Muscle</tissue>
    </source>
</reference>
<reference key="4">
    <citation type="journal article" date="2004" name="Gene">
        <title>Recapitulation of the Roberts syndrome cellular phenotype by inhibition of INCENP, ZWINT-1 and ZW10 genes.</title>
        <authorList>
            <person name="Musio A."/>
            <person name="Mariani T."/>
            <person name="Montagna C."/>
            <person name="Zambroni D."/>
            <person name="Ascoli C."/>
            <person name="Ried T."/>
            <person name="Vezzoni P."/>
        </authorList>
    </citation>
    <scope>FUNCTION</scope>
</reference>
<reference key="5">
    <citation type="journal article" date="2004" name="J. Biol. Chem.">
        <title>Human Zwint-1 specifies localization of Zeste White 10 to kinetochores and is essential for mitotic checkpoint signaling.</title>
        <authorList>
            <person name="Wang H."/>
            <person name="Hu X."/>
            <person name="Ding X."/>
            <person name="Dou Z."/>
            <person name="Yang Z."/>
            <person name="Shaw A.W."/>
            <person name="Teng M."/>
            <person name="Cleveland D.W."/>
            <person name="Goldberg M.L."/>
            <person name="Niu L."/>
            <person name="Yao X."/>
        </authorList>
    </citation>
    <scope>FUNCTION</scope>
    <scope>INTERACTION WITH ZW10</scope>
    <scope>SUBCELLULAR LOCATION</scope>
</reference>
<reference key="6">
    <citation type="journal article" date="2004" name="Nat. Cell Biol.">
        <title>A conserved Mis12 centromere complex is linked to heterochromatic HP1 and outer kinetochore protein Zwint-1.</title>
        <authorList>
            <person name="Obuse C."/>
            <person name="Iwasaki O."/>
            <person name="Kiyomitsu T."/>
            <person name="Goshima G."/>
            <person name="Toyoda Y."/>
            <person name="Yanagida M."/>
        </authorList>
    </citation>
    <scope>IDENTIFICATION BY MASS SPECTROMETRY</scope>
    <scope>INTERACTION WITH MIS12</scope>
    <scope>SUBCELLULAR LOCATION</scope>
</reference>
<reference key="7">
    <citation type="journal article" date="2005" name="J. Cell Biol.">
        <title>ZW10 links mitotic checkpoint signaling to the structural kinetochore.</title>
        <authorList>
            <person name="Kops G.J.P.L."/>
            <person name="Kim Y."/>
            <person name="Weaver B.A.A."/>
            <person name="Mao Y."/>
            <person name="McLeod I."/>
            <person name="Yates J.R. III"/>
            <person name="Tagaya M."/>
            <person name="Cleveland D.W."/>
        </authorList>
    </citation>
    <scope>FUNCTION</scope>
    <scope>IDENTIFICATION BY MASS SPECTROMETRY</scope>
    <scope>INTERACTION WITH KNL1; CETN3; DSN1; NDC80; MIS12; PMF1 AND ZW10</scope>
    <scope>SUBCELLULAR LOCATION</scope>
</reference>
<reference key="8">
    <citation type="journal article" date="2006" name="Oncogene">
        <title>Hec1 sequentially recruits Zwint-1 and ZW10 to kinetochores for faithful chromosome segregation and spindle checkpoint control.</title>
        <authorList>
            <person name="Lin Y.-T."/>
            <person name="Chen Y."/>
            <person name="Wu G."/>
            <person name="Lee W.-H."/>
        </authorList>
    </citation>
    <scope>FUNCTION</scope>
    <scope>INTERACTION WITH NDC80 AND ZW10</scope>
    <scope>SUBCELLULAR LOCATION</scope>
</reference>
<reference key="9">
    <citation type="journal article" date="2016" name="Cell">
        <title>Structure of the MIS12 Complex and Molecular Basis of Its Interaction with CENP-C at Human Kinetochores.</title>
        <authorList>
            <person name="Petrovic A."/>
            <person name="Keller J."/>
            <person name="Liu Y."/>
            <person name="Overlack K."/>
            <person name="John J."/>
            <person name="Dimitrova Y.N."/>
            <person name="Jenni S."/>
            <person name="van Gerwen S."/>
            <person name="Stege P."/>
            <person name="Wohlgemuth S."/>
            <person name="Rombaut P."/>
            <person name="Herzog F."/>
            <person name="Harrison S.C."/>
            <person name="Vetter I.R."/>
            <person name="Musacchio A."/>
        </authorList>
    </citation>
    <scope>FUNCTION</scope>
    <scope>IDENTIFICATION IN THE KNL1 COMPLEX</scope>
    <scope>SUBCELLULAR LOCATION</scope>
</reference>
<reference key="10">
    <citation type="journal article" date="2011" name="BMC Syst. Biol.">
        <title>Initial characterization of the human central proteome.</title>
        <authorList>
            <person name="Burkard T.R."/>
            <person name="Planyavsky M."/>
            <person name="Kaupe I."/>
            <person name="Breitwieser F.P."/>
            <person name="Buerckstuemmer T."/>
            <person name="Bennett K.L."/>
            <person name="Superti-Furga G."/>
            <person name="Colinge J."/>
        </authorList>
    </citation>
    <scope>IDENTIFICATION BY MASS SPECTROMETRY [LARGE SCALE ANALYSIS]</scope>
</reference>
<reference key="11">
    <citation type="journal article" date="2014" name="Mol. Cell">
        <title>Modular assembly of RWD domains on the Mis12 complex underlies outer kinetochore organization.</title>
        <authorList>
            <person name="Petrovic A."/>
            <person name="Mosalaganti S."/>
            <person name="Keller J."/>
            <person name="Mattiuzzo M."/>
            <person name="Overlack K."/>
            <person name="Krenn V."/>
            <person name="De Antoni A."/>
            <person name="Wohlgemuth S."/>
            <person name="Cecatiello V."/>
            <person name="Pasqualato S."/>
            <person name="Raunser S."/>
            <person name="Musacchio A."/>
        </authorList>
    </citation>
    <scope>FUNCTION</scope>
    <scope>IDENTIFICATION IN THE KMN NETWORK AND THE KNL1 COMPLEX</scope>
</reference>
<reference key="12">
    <citation type="journal article" date="2024" name="Nat. Struct. Mol. Biol.">
        <title>Structure of the human KMN complex and implications for regulation of its assembly.</title>
        <authorList>
            <person name="Polley S."/>
            <person name="Raisch T."/>
            <person name="Ghetti S."/>
            <person name="Koerner M."/>
            <person name="Terbeck M."/>
            <person name="Graeter F."/>
            <person name="Raunser S."/>
            <person name="Aponte-Santamaria C."/>
            <person name="Vetter I.R."/>
            <person name="Musacchio A."/>
        </authorList>
    </citation>
    <scope>FUNCTION</scope>
    <scope>IDENTIFICATION IN THE KMN NETWORK AND THE KNL1 COMPLEX</scope>
    <scope>SUBCELLULAR LOCATION</scope>
</reference>
<reference evidence="17" key="13">
    <citation type="journal article" date="2024" name="Nat. Struct. Mol. Biol.">
        <title>Structure of the human outer kinetochore KMN network complex.</title>
        <authorList>
            <person name="Yatskevich S."/>
            <person name="Yang J."/>
            <person name="Bellini D."/>
            <person name="Zhang Z."/>
            <person name="Barford D."/>
        </authorList>
    </citation>
    <scope>STRUCTURE BY ELECTRON MICROSCOPY (3.00 ANGSTROMS)</scope>
    <scope>FUNCTION</scope>
    <scope>IDENTIFICATION IN THE KMN NETWORK AND THE KNL1 COMPLEX</scope>
</reference>
<sequence length="277" mass="31293">MEAAETEAEAAALEVLAEVAGILEPVGLQEEAELPAKILVEFVVDSQKKDKLLCSQLQVADFLQNILAQEDTAKGLDPLASEDTSRQKAIAAKEQWKELKATYREHVEAIKIGLTKALTQMEEAQRKRTQLREAFEQLQAKKQMAMEKRRAVQNQWQLQQEKHLQHLAEVSAEVRERKTGTQQELDRVFQKLGNLKQQAEQERDKLQRYQTFLQLLYTLQGKLLFPEAEAEAENLPDDKPQQPTRPQEQSTGDTMGRDPGVSFKAVGLQPAGDVNLP</sequence>
<feature type="chain" id="PRO_0000066594" description="Outer kinetochore KNL1 complex subunit ZWINT">
    <location>
        <begin position="1"/>
        <end position="277"/>
    </location>
</feature>
<feature type="region of interest" description="Interaction with NDC80 and ZW10">
    <location>
        <begin position="80"/>
        <end position="155"/>
    </location>
</feature>
<feature type="region of interest" description="Disordered" evidence="3">
    <location>
        <begin position="228"/>
        <end position="277"/>
    </location>
</feature>
<feature type="coiled-coil region" evidence="2">
    <location>
        <begin position="104"/>
        <end position="217"/>
    </location>
</feature>
<feature type="compositionally biased region" description="Polar residues" evidence="3">
    <location>
        <begin position="241"/>
        <end position="253"/>
    </location>
</feature>
<feature type="splice variant" id="VSP_047660" description="In isoform 2." evidence="15">
    <location>
        <begin position="174"/>
        <end position="220"/>
    </location>
</feature>
<feature type="sequence variant" id="VAR_028783" description="In dbSNP:rs11005328.">
    <original>A</original>
    <variation>S</variation>
    <location>
        <position position="4"/>
    </location>
</feature>
<feature type="sequence variant" id="VAR_051505" description="In dbSNP:rs2241666." evidence="4 7">
    <original>R</original>
    <variation>G</variation>
    <location>
        <position position="187"/>
    </location>
</feature>
<feature type="helix" evidence="18">
    <location>
        <begin position="184"/>
        <end position="220"/>
    </location>
</feature>
<proteinExistence type="evidence at protein level"/>
<dbReference type="EMBL" id="AF067656">
    <property type="protein sequence ID" value="AAC78629.1"/>
    <property type="molecule type" value="mRNA"/>
</dbReference>
<dbReference type="EMBL" id="AC010996">
    <property type="status" value="NOT_ANNOTATED_CDS"/>
    <property type="molecule type" value="Genomic_DNA"/>
</dbReference>
<dbReference type="EMBL" id="BC000411">
    <property type="protein sequence ID" value="AAH00411.1"/>
    <property type="molecule type" value="mRNA"/>
</dbReference>
<dbReference type="EMBL" id="BC020979">
    <property type="protein sequence ID" value="AAH20979.1"/>
    <property type="molecule type" value="mRNA"/>
</dbReference>
<dbReference type="EMBL" id="BC110399">
    <property type="protein sequence ID" value="AAI10400.1"/>
    <property type="molecule type" value="mRNA"/>
</dbReference>
<dbReference type="CCDS" id="CCDS31205.1">
    <molecule id="O95229-2"/>
</dbReference>
<dbReference type="CCDS" id="CCDS7249.1">
    <molecule id="O95229-1"/>
</dbReference>
<dbReference type="RefSeq" id="NP_001005413.1">
    <molecule id="O95229-2"/>
    <property type="nucleotide sequence ID" value="NM_001005413.1"/>
</dbReference>
<dbReference type="RefSeq" id="NP_008988.2">
    <molecule id="O95229-1"/>
    <property type="nucleotide sequence ID" value="NM_007057.3"/>
</dbReference>
<dbReference type="RefSeq" id="NP_127490.1">
    <molecule id="O95229-1"/>
    <property type="nucleotide sequence ID" value="NM_032997.3"/>
</dbReference>
<dbReference type="PDB" id="8PPR">
    <property type="method" value="EM"/>
    <property type="resolution" value="3.00 A"/>
    <property type="chains" value="Z=1-277"/>
</dbReference>
<dbReference type="PDBsum" id="8PPR"/>
<dbReference type="EMDB" id="EMD-17814"/>
<dbReference type="SMR" id="O95229"/>
<dbReference type="BioGRID" id="116303">
    <property type="interactions" value="169"/>
</dbReference>
<dbReference type="ComplexPortal" id="CPX-5644">
    <property type="entry name" value="Kinetochore KNL1 complex"/>
</dbReference>
<dbReference type="CORUM" id="O95229"/>
<dbReference type="FunCoup" id="O95229">
    <property type="interactions" value="1029"/>
</dbReference>
<dbReference type="IntAct" id="O95229">
    <property type="interactions" value="127"/>
</dbReference>
<dbReference type="MINT" id="O95229"/>
<dbReference type="STRING" id="9606.ENSP00000363055"/>
<dbReference type="iPTMnet" id="O95229"/>
<dbReference type="PhosphoSitePlus" id="O95229"/>
<dbReference type="BioMuta" id="ZWINT"/>
<dbReference type="jPOST" id="O95229"/>
<dbReference type="MassIVE" id="O95229"/>
<dbReference type="PaxDb" id="9606-ENSP00000363055"/>
<dbReference type="PeptideAtlas" id="O95229"/>
<dbReference type="ProteomicsDB" id="1641"/>
<dbReference type="ProteomicsDB" id="50728">
    <molecule id="O95229-1"/>
</dbReference>
<dbReference type="Pumba" id="O95229"/>
<dbReference type="Antibodypedia" id="28018">
    <property type="antibodies" value="273 antibodies from 31 providers"/>
</dbReference>
<dbReference type="DNASU" id="11130"/>
<dbReference type="Ensembl" id="ENST00000361148.6">
    <molecule id="O95229-2"/>
    <property type="protein sequence ID" value="ENSP00000354921.6"/>
    <property type="gene ID" value="ENSG00000122952.17"/>
</dbReference>
<dbReference type="Ensembl" id="ENST00000373944.8">
    <molecule id="O95229-1"/>
    <property type="protein sequence ID" value="ENSP00000363055.3"/>
    <property type="gene ID" value="ENSG00000122952.17"/>
</dbReference>
<dbReference type="Ensembl" id="ENST00000395405.5">
    <molecule id="O95229-1"/>
    <property type="protein sequence ID" value="ENSP00000378801.1"/>
    <property type="gene ID" value="ENSG00000122952.17"/>
</dbReference>
<dbReference type="GeneID" id="11130"/>
<dbReference type="KEGG" id="hsa:11130"/>
<dbReference type="MANE-Select" id="ENST00000373944.8">
    <property type="protein sequence ID" value="ENSP00000363055.3"/>
    <property type="RefSeq nucleotide sequence ID" value="NM_007057.4"/>
    <property type="RefSeq protein sequence ID" value="NP_008988.2"/>
</dbReference>
<dbReference type="UCSC" id="uc001jjx.2">
    <molecule id="O95229-1"/>
    <property type="organism name" value="human"/>
</dbReference>
<dbReference type="AGR" id="HGNC:13195"/>
<dbReference type="CTD" id="11130"/>
<dbReference type="DisGeNET" id="11130"/>
<dbReference type="GeneCards" id="ZWINT"/>
<dbReference type="HGNC" id="HGNC:13195">
    <property type="gene designation" value="ZWINT"/>
</dbReference>
<dbReference type="HPA" id="ENSG00000122952">
    <property type="expression patterns" value="Tissue enhanced (bone marrow, lymphoid tissue)"/>
</dbReference>
<dbReference type="MIM" id="609177">
    <property type="type" value="gene"/>
</dbReference>
<dbReference type="neXtProt" id="NX_O95229"/>
<dbReference type="OpenTargets" id="ENSG00000122952"/>
<dbReference type="PharmGKB" id="PA37761"/>
<dbReference type="VEuPathDB" id="HostDB:ENSG00000122952"/>
<dbReference type="eggNOG" id="ENOG502S6PG">
    <property type="taxonomic scope" value="Eukaryota"/>
</dbReference>
<dbReference type="GeneTree" id="ENSGT00390000017639"/>
<dbReference type="HOGENOM" id="CLU_089675_0_0_1"/>
<dbReference type="InParanoid" id="O95229"/>
<dbReference type="OMA" id="TEAKEQW"/>
<dbReference type="OrthoDB" id="9893446at2759"/>
<dbReference type="PAN-GO" id="O95229">
    <property type="GO annotations" value="7 GO annotations based on evolutionary models"/>
</dbReference>
<dbReference type="PhylomeDB" id="O95229"/>
<dbReference type="TreeFam" id="TF338101"/>
<dbReference type="PathwayCommons" id="O95229"/>
<dbReference type="Reactome" id="R-HSA-141444">
    <property type="pathway name" value="Amplification of signal from unattached kinetochores via a MAD2 inhibitory signal"/>
</dbReference>
<dbReference type="Reactome" id="R-HSA-2467813">
    <property type="pathway name" value="Separation of Sister Chromatids"/>
</dbReference>
<dbReference type="Reactome" id="R-HSA-2500257">
    <property type="pathway name" value="Resolution of Sister Chromatid Cohesion"/>
</dbReference>
<dbReference type="Reactome" id="R-HSA-5663220">
    <property type="pathway name" value="RHO GTPases Activate Formins"/>
</dbReference>
<dbReference type="Reactome" id="R-HSA-68877">
    <property type="pathway name" value="Mitotic Prometaphase"/>
</dbReference>
<dbReference type="Reactome" id="R-HSA-9648025">
    <property type="pathway name" value="EML4 and NUDC in mitotic spindle formation"/>
</dbReference>
<dbReference type="SignaLink" id="O95229"/>
<dbReference type="SIGNOR" id="O95229"/>
<dbReference type="BioGRID-ORCS" id="11130">
    <property type="hits" value="427 hits in 1171 CRISPR screens"/>
</dbReference>
<dbReference type="ChiTaRS" id="ZWINT">
    <property type="organism name" value="human"/>
</dbReference>
<dbReference type="GeneWiki" id="ZWINT"/>
<dbReference type="GenomeRNAi" id="11130"/>
<dbReference type="Pharos" id="O95229">
    <property type="development level" value="Tbio"/>
</dbReference>
<dbReference type="PRO" id="PR:O95229"/>
<dbReference type="Proteomes" id="UP000005640">
    <property type="component" value="Chromosome 10"/>
</dbReference>
<dbReference type="RNAct" id="O95229">
    <property type="molecule type" value="protein"/>
</dbReference>
<dbReference type="Bgee" id="ENSG00000122952">
    <property type="expression patterns" value="Expressed in oocyte and 176 other cell types or tissues"/>
</dbReference>
<dbReference type="ExpressionAtlas" id="O95229">
    <property type="expression patterns" value="baseline and differential"/>
</dbReference>
<dbReference type="GO" id="GO:0005737">
    <property type="term" value="C:cytoplasm"/>
    <property type="evidence" value="ECO:0000314"/>
    <property type="project" value="BHF-UCL"/>
</dbReference>
<dbReference type="GO" id="GO:0005829">
    <property type="term" value="C:cytosol"/>
    <property type="evidence" value="ECO:0000314"/>
    <property type="project" value="HPA"/>
</dbReference>
<dbReference type="GO" id="GO:0030425">
    <property type="term" value="C:dendrite"/>
    <property type="evidence" value="ECO:0000318"/>
    <property type="project" value="GO_Central"/>
</dbReference>
<dbReference type="GO" id="GO:0000776">
    <property type="term" value="C:kinetochore"/>
    <property type="evidence" value="ECO:0000314"/>
    <property type="project" value="BHF-UCL"/>
</dbReference>
<dbReference type="GO" id="GO:0180019">
    <property type="term" value="C:Knl1/Spc105 complex"/>
    <property type="evidence" value="ECO:0000314"/>
    <property type="project" value="UniProtKB"/>
</dbReference>
<dbReference type="GO" id="GO:0016604">
    <property type="term" value="C:nuclear body"/>
    <property type="evidence" value="ECO:0000314"/>
    <property type="project" value="HPA"/>
</dbReference>
<dbReference type="GO" id="GO:0005654">
    <property type="term" value="C:nucleoplasm"/>
    <property type="evidence" value="ECO:0000314"/>
    <property type="project" value="HPA"/>
</dbReference>
<dbReference type="GO" id="GO:0000940">
    <property type="term" value="C:outer kinetochore"/>
    <property type="evidence" value="ECO:0000314"/>
    <property type="project" value="UniProtKB"/>
</dbReference>
<dbReference type="GO" id="GO:0051301">
    <property type="term" value="P:cell division"/>
    <property type="evidence" value="ECO:0007669"/>
    <property type="project" value="UniProtKB-KW"/>
</dbReference>
<dbReference type="GO" id="GO:0051649">
    <property type="term" value="P:establishment of localization in cell"/>
    <property type="evidence" value="ECO:0000314"/>
    <property type="project" value="HGNC-UCL"/>
</dbReference>
<dbReference type="GO" id="GO:0031619">
    <property type="term" value="P:homologous chromosome orientation in meiotic metaphase I"/>
    <property type="evidence" value="ECO:0000250"/>
    <property type="project" value="UniProtKB"/>
</dbReference>
<dbReference type="GO" id="GO:0000070">
    <property type="term" value="P:mitotic sister chromatid segregation"/>
    <property type="evidence" value="ECO:0000314"/>
    <property type="project" value="HGNC-UCL"/>
</dbReference>
<dbReference type="GO" id="GO:0007094">
    <property type="term" value="P:mitotic spindle assembly checkpoint signaling"/>
    <property type="evidence" value="ECO:0000314"/>
    <property type="project" value="HGNC-UCL"/>
</dbReference>
<dbReference type="GO" id="GO:1905325">
    <property type="term" value="P:regulation of meiosis I spindle assembly checkpoint"/>
    <property type="evidence" value="ECO:0000250"/>
    <property type="project" value="UniProtKB"/>
</dbReference>
<dbReference type="InterPro" id="IPR029092">
    <property type="entry name" value="Zwint-1"/>
</dbReference>
<dbReference type="PANTHER" id="PTHR31504:SF1">
    <property type="entry name" value="ZW10 INTERACTOR"/>
    <property type="match status" value="1"/>
</dbReference>
<dbReference type="PANTHER" id="PTHR31504">
    <property type="entry name" value="ZW10 INTERACTOR ZWINT"/>
    <property type="match status" value="1"/>
</dbReference>
<dbReference type="Pfam" id="PF15556">
    <property type="entry name" value="Zwint"/>
    <property type="match status" value="1"/>
</dbReference>
<keyword id="KW-0002">3D-structure</keyword>
<keyword id="KW-0025">Alternative splicing</keyword>
<keyword id="KW-0131">Cell cycle</keyword>
<keyword id="KW-0132">Cell division</keyword>
<keyword id="KW-0137">Centromere</keyword>
<keyword id="KW-0158">Chromosome</keyword>
<keyword id="KW-0175">Coiled coil</keyword>
<keyword id="KW-0995">Kinetochore</keyword>
<keyword id="KW-0498">Mitosis</keyword>
<keyword id="KW-0539">Nucleus</keyword>
<keyword id="KW-1267">Proteomics identification</keyword>
<keyword id="KW-1185">Reference proteome</keyword>
<protein>
    <recommendedName>
        <fullName evidence="15">Outer kinetochore KNL1 complex subunit ZWINT</fullName>
    </recommendedName>
    <alternativeName>
        <fullName>ZW10 interactor</fullName>
    </alternativeName>
    <alternativeName>
        <fullName>ZW10-interacting protein 1</fullName>
        <shortName>Zwint-1</shortName>
    </alternativeName>
</protein>
<comment type="function">
    <text evidence="1 5 6 9 10 11 12 13 14">Acts as a component of the outer kinetochore KNL1 complex that serves as a docking point for spindle assembly checkpoint components and mediates microtubule-kinetochore interactions (PubMed:15094189, PubMed:15485811, PubMed:15824131, PubMed:16732327, PubMed:24530301, PubMed:27881301, PubMed:38459127, PubMed:38459128). Kinetochores, consisting of a centromere-associated inner segment and a microtubule-contacting outer segment, play a crucial role in chromosome segregation by mediating the physical connection between centromeric DNA and spindle microtubules (PubMed:15094189, PubMed:15485811, PubMed:16732327). The outer kinetochore is made up of the ten-subunit KMN network, comprising the MIS12, NDC80 and KNL1 complexes, and auxiliary microtubule-associated components; together they connect the outer kinetochore with the inner kinetochore, bind microtubules, and mediate interactions with mitotic checkpoint proteins that delay anaphase until chromosomes are bioriented on the spindle (PubMed:15094189, PubMed:15485811, PubMed:15824131, PubMed:16732327, PubMed:24530301, PubMed:38459127, PubMed:38459128). Targets the RZZ complex to the kinetochore at prometaphase (PubMed:15485811). Recruits MAD2L1 to the kinetochore, but is not required for BUB1B localization (By similarity). In addition to orienting mitotic chromosomes, it is also essential for alignment of homologous chromosomes during meiotic metaphase I (By similarity). In meiosis I, required to activate the spindle assembly checkpoint at unattached kinetochores to correct erroneous kinetochore-microtubule attachments (PubMed:15485811).</text>
</comment>
<comment type="subunit">
    <text evidence="6 8 9 10 11 12 13 14 16">Component of the KNL1 complex composed of KNL1 and ZWINT (Probable) (PubMed:24530301, PubMed:27881301, PubMed:38459127, PubMed:38459128). Part of the ten-subunit outer kinetochore KMN network that includes the KNL1, MIS12 and NDC80 complexes; a bioriented kinetochore contains approximately 150 copies of the network (PubMed:24530301, PubMed:38459127, PubMed:38459128). Interacts with the MIS12 complex subunits MIS12 DSN1, and PMF1 (PubMed:15502821, PubMed:15824131). Interacts with the NDC80 complex subunit NDC80 during mitosis (PubMed:15824131, PubMed:16732327). Interacts with ZW10 (PubMed:15485811, PubMed:16732327, PubMed:24530301). Interacts with CETN3 (PubMed:15824131).</text>
</comment>
<comment type="interaction">
    <interactant intactId="EBI-1001132">
        <id>O95229</id>
    </interactant>
    <interactant intactId="EBI-1050106">
        <id>O75934</id>
        <label>BCAS2</label>
    </interactant>
    <organismsDiffer>false</organismsDiffer>
    <experiments>3</experiments>
</comment>
<comment type="interaction">
    <interactant intactId="EBI-1001132">
        <id>O95229</id>
    </interactant>
    <interactant intactId="EBI-949378">
        <id>Q14457</id>
        <label>BECN1</label>
    </interactant>
    <organismsDiffer>false</organismsDiffer>
    <experiments>6</experiments>
</comment>
<comment type="interaction">
    <interactant intactId="EBI-1001132">
        <id>O95229</id>
    </interactant>
    <interactant intactId="EBI-12123320">
        <id>Q12934-2</id>
        <label>BFSP1</label>
    </interactant>
    <organismsDiffer>false</organismsDiffer>
    <experiments>3</experiments>
</comment>
<comment type="interaction">
    <interactant intactId="EBI-1001132">
        <id>O95229</id>
    </interactant>
    <interactant intactId="EBI-10175300">
        <id>Q8TD31-3</id>
        <label>CCHCR1</label>
    </interactant>
    <organismsDiffer>false</organismsDiffer>
    <experiments>3</experiments>
</comment>
<comment type="interaction">
    <interactant intactId="EBI-1001132">
        <id>O95229</id>
    </interactant>
    <interactant intactId="EBI-6658203">
        <id>Q86YD7</id>
        <label>FAM90A1</label>
    </interactant>
    <organismsDiffer>false</organismsDiffer>
    <experiments>3</experiments>
</comment>
<comment type="interaction">
    <interactant intactId="EBI-1001132">
        <id>O95229</id>
    </interactant>
    <interactant intactId="EBI-948266">
        <id>O14901</id>
        <label>KLF11</label>
    </interactant>
    <organismsDiffer>false</organismsDiffer>
    <experiments>3</experiments>
</comment>
<comment type="interaction">
    <interactant intactId="EBI-1001132">
        <id>O95229</id>
    </interactant>
    <interactant intactId="EBI-2949715">
        <id>O95678</id>
        <label>KRT75</label>
    </interactant>
    <organismsDiffer>false</organismsDiffer>
    <experiments>3</experiments>
</comment>
<comment type="interaction">
    <interactant intactId="EBI-1001132">
        <id>O95229</id>
    </interactant>
    <interactant intactId="EBI-11991020">
        <id>A6NI15</id>
        <label>MSGN1</label>
    </interactant>
    <organismsDiffer>false</organismsDiffer>
    <experiments>3</experiments>
</comment>
<comment type="interaction">
    <interactant intactId="EBI-1001132">
        <id>O95229</id>
    </interactant>
    <interactant intactId="EBI-715849">
        <id>O14777</id>
        <label>NDC80</label>
    </interactant>
    <organismsDiffer>false</organismsDiffer>
    <experiments>16</experiments>
</comment>
<comment type="interaction">
    <interactant intactId="EBI-1001132">
        <id>O95229</id>
    </interactant>
    <interactant intactId="EBI-741048">
        <id>Q7Z3B4</id>
        <label>NUP54</label>
    </interactant>
    <organismsDiffer>false</organismsDiffer>
    <experiments>3</experiments>
</comment>
<comment type="interaction">
    <interactant intactId="EBI-1001132">
        <id>O95229</id>
    </interactant>
    <interactant intactId="EBI-2811583">
        <id>Q9BVL2</id>
        <label>NUP58</label>
    </interactant>
    <organismsDiffer>false</organismsDiffer>
    <experiments>3</experiments>
</comment>
<comment type="interaction">
    <interactant intactId="EBI-1001132">
        <id>O95229</id>
    </interactant>
    <interactant intactId="EBI-20737478">
        <id>Q9UKZ9</id>
        <label>PCOLCE2</label>
    </interactant>
    <organismsDiffer>false</organismsDiffer>
    <experiments>2</experiments>
</comment>
<comment type="interaction">
    <interactant intactId="EBI-1001132">
        <id>O95229</id>
    </interactant>
    <interactant intactId="EBI-346882">
        <id>Q99816</id>
        <label>TSG101</label>
    </interactant>
    <organismsDiffer>false</organismsDiffer>
    <experiments>3</experiments>
</comment>
<comment type="interaction">
    <interactant intactId="EBI-1001132">
        <id>O95229</id>
    </interactant>
    <interactant intactId="EBI-1001217">
        <id>O43264</id>
        <label>ZW10</label>
    </interactant>
    <organismsDiffer>false</organismsDiffer>
    <experiments>6</experiments>
</comment>
<comment type="subcellular location">
    <subcellularLocation>
        <location evidence="14">Nucleus</location>
    </subcellularLocation>
    <subcellularLocation>
        <location evidence="6 8 10 12 14">Chromosome</location>
        <location evidence="6 8 10 12 14">Centromere</location>
        <location evidence="6 8 10 12 14">Kinetochore</location>
    </subcellularLocation>
    <text evidence="1 8 12">Localizes to kinetochores from late prophase to anaphase (PubMed:15502821, PubMed:27881301). Localizes to kinetochores both during mitosis and meiosis (By similarity).</text>
</comment>
<comment type="alternative products">
    <event type="alternative splicing"/>
    <isoform>
        <id>O95229-1</id>
        <name>1</name>
        <sequence type="displayed"/>
    </isoform>
    <isoform>
        <id>O95229-2</id>
        <name>2</name>
        <sequence type="described" ref="VSP_047660"/>
    </isoform>
</comment>